<evidence type="ECO:0000255" key="1">
    <source>
        <dbReference type="HAMAP-Rule" id="MF_00127"/>
    </source>
</evidence>
<protein>
    <recommendedName>
        <fullName evidence="1">Histidine--tRNA ligase</fullName>
        <ecNumber evidence="1">6.1.1.21</ecNumber>
    </recommendedName>
    <alternativeName>
        <fullName evidence="1">Histidyl-tRNA synthetase</fullName>
        <shortName evidence="1">HisRS</shortName>
    </alternativeName>
</protein>
<organism>
    <name type="scientific">Clostridium botulinum (strain Hall / ATCC 3502 / NCTC 13319 / Type A)</name>
    <dbReference type="NCBI Taxonomy" id="441771"/>
    <lineage>
        <taxon>Bacteria</taxon>
        <taxon>Bacillati</taxon>
        <taxon>Bacillota</taxon>
        <taxon>Clostridia</taxon>
        <taxon>Eubacteriales</taxon>
        <taxon>Clostridiaceae</taxon>
        <taxon>Clostridium</taxon>
    </lineage>
</organism>
<reference key="1">
    <citation type="journal article" date="2007" name="Genome Res.">
        <title>Genome sequence of a proteolytic (Group I) Clostridium botulinum strain Hall A and comparative analysis of the clostridial genomes.</title>
        <authorList>
            <person name="Sebaihia M."/>
            <person name="Peck M.W."/>
            <person name="Minton N.P."/>
            <person name="Thomson N.R."/>
            <person name="Holden M.T.G."/>
            <person name="Mitchell W.J."/>
            <person name="Carter A.T."/>
            <person name="Bentley S.D."/>
            <person name="Mason D.R."/>
            <person name="Crossman L."/>
            <person name="Paul C.J."/>
            <person name="Ivens A."/>
            <person name="Wells-Bennik M.H.J."/>
            <person name="Davis I.J."/>
            <person name="Cerdeno-Tarraga A.M."/>
            <person name="Churcher C."/>
            <person name="Quail M.A."/>
            <person name="Chillingworth T."/>
            <person name="Feltwell T."/>
            <person name="Fraser A."/>
            <person name="Goodhead I."/>
            <person name="Hance Z."/>
            <person name="Jagels K."/>
            <person name="Larke N."/>
            <person name="Maddison M."/>
            <person name="Moule S."/>
            <person name="Mungall K."/>
            <person name="Norbertczak H."/>
            <person name="Rabbinowitsch E."/>
            <person name="Sanders M."/>
            <person name="Simmonds M."/>
            <person name="White B."/>
            <person name="Whithead S."/>
            <person name="Parkhill J."/>
        </authorList>
    </citation>
    <scope>NUCLEOTIDE SEQUENCE [LARGE SCALE GENOMIC DNA]</scope>
    <source>
        <strain>Hall / ATCC 3502 / NCTC 13319 / Type A</strain>
    </source>
</reference>
<reference key="2">
    <citation type="journal article" date="2007" name="PLoS ONE">
        <title>Analysis of the neurotoxin complex genes in Clostridium botulinum A1-A4 and B1 strains: BoNT/A3, /Ba4 and /B1 clusters are located within plasmids.</title>
        <authorList>
            <person name="Smith T.J."/>
            <person name="Hill K.K."/>
            <person name="Foley B.T."/>
            <person name="Detter J.C."/>
            <person name="Munk A.C."/>
            <person name="Bruce D.C."/>
            <person name="Doggett N.A."/>
            <person name="Smith L.A."/>
            <person name="Marks J.D."/>
            <person name="Xie G."/>
            <person name="Brettin T.S."/>
        </authorList>
    </citation>
    <scope>NUCLEOTIDE SEQUENCE [LARGE SCALE GENOMIC DNA]</scope>
    <source>
        <strain>Hall / ATCC 3502 / NCTC 13319 / Type A</strain>
    </source>
</reference>
<name>SYH_CLOBH</name>
<accession>A5I6D6</accession>
<accession>A7G7L9</accession>
<dbReference type="EC" id="6.1.1.21" evidence="1"/>
<dbReference type="EMBL" id="CP000727">
    <property type="protein sequence ID" value="ABS39255.1"/>
    <property type="molecule type" value="Genomic_DNA"/>
</dbReference>
<dbReference type="EMBL" id="AM412317">
    <property type="protein sequence ID" value="CAL84618.1"/>
    <property type="molecule type" value="Genomic_DNA"/>
</dbReference>
<dbReference type="RefSeq" id="WP_012048076.1">
    <property type="nucleotide sequence ID" value="NC_009698.1"/>
</dbReference>
<dbReference type="RefSeq" id="YP_001255547.1">
    <property type="nucleotide sequence ID" value="NC_009495.1"/>
</dbReference>
<dbReference type="RefSeq" id="YP_001388784.1">
    <property type="nucleotide sequence ID" value="NC_009698.1"/>
</dbReference>
<dbReference type="SMR" id="A5I6D6"/>
<dbReference type="GeneID" id="5187316"/>
<dbReference type="KEGG" id="cbh:CLC_2957"/>
<dbReference type="KEGG" id="cbo:CBO3055"/>
<dbReference type="PATRIC" id="fig|413999.7.peg.3033"/>
<dbReference type="HOGENOM" id="CLU_025113_1_1_9"/>
<dbReference type="PRO" id="PR:A5I6D6"/>
<dbReference type="Proteomes" id="UP000001986">
    <property type="component" value="Chromosome"/>
</dbReference>
<dbReference type="GO" id="GO:0005737">
    <property type="term" value="C:cytoplasm"/>
    <property type="evidence" value="ECO:0007669"/>
    <property type="project" value="UniProtKB-SubCell"/>
</dbReference>
<dbReference type="GO" id="GO:0005524">
    <property type="term" value="F:ATP binding"/>
    <property type="evidence" value="ECO:0007669"/>
    <property type="project" value="UniProtKB-UniRule"/>
</dbReference>
<dbReference type="GO" id="GO:0140096">
    <property type="term" value="F:catalytic activity, acting on a protein"/>
    <property type="evidence" value="ECO:0007669"/>
    <property type="project" value="UniProtKB-ARBA"/>
</dbReference>
<dbReference type="GO" id="GO:0004821">
    <property type="term" value="F:histidine-tRNA ligase activity"/>
    <property type="evidence" value="ECO:0007669"/>
    <property type="project" value="UniProtKB-UniRule"/>
</dbReference>
<dbReference type="GO" id="GO:0016740">
    <property type="term" value="F:transferase activity"/>
    <property type="evidence" value="ECO:0007669"/>
    <property type="project" value="UniProtKB-ARBA"/>
</dbReference>
<dbReference type="GO" id="GO:0006427">
    <property type="term" value="P:histidyl-tRNA aminoacylation"/>
    <property type="evidence" value="ECO:0007669"/>
    <property type="project" value="UniProtKB-UniRule"/>
</dbReference>
<dbReference type="CDD" id="cd00773">
    <property type="entry name" value="HisRS-like_core"/>
    <property type="match status" value="1"/>
</dbReference>
<dbReference type="CDD" id="cd00859">
    <property type="entry name" value="HisRS_anticodon"/>
    <property type="match status" value="1"/>
</dbReference>
<dbReference type="FunFam" id="3.30.930.10:FF:000005">
    <property type="entry name" value="Histidine--tRNA ligase"/>
    <property type="match status" value="1"/>
</dbReference>
<dbReference type="Gene3D" id="3.40.50.800">
    <property type="entry name" value="Anticodon-binding domain"/>
    <property type="match status" value="1"/>
</dbReference>
<dbReference type="Gene3D" id="3.30.930.10">
    <property type="entry name" value="Bira Bifunctional Protein, Domain 2"/>
    <property type="match status" value="1"/>
</dbReference>
<dbReference type="HAMAP" id="MF_00127">
    <property type="entry name" value="His_tRNA_synth"/>
    <property type="match status" value="1"/>
</dbReference>
<dbReference type="InterPro" id="IPR006195">
    <property type="entry name" value="aa-tRNA-synth_II"/>
</dbReference>
<dbReference type="InterPro" id="IPR045864">
    <property type="entry name" value="aa-tRNA-synth_II/BPL/LPL"/>
</dbReference>
<dbReference type="InterPro" id="IPR004154">
    <property type="entry name" value="Anticodon-bd"/>
</dbReference>
<dbReference type="InterPro" id="IPR036621">
    <property type="entry name" value="Anticodon-bd_dom_sf"/>
</dbReference>
<dbReference type="InterPro" id="IPR015807">
    <property type="entry name" value="His-tRNA-ligase"/>
</dbReference>
<dbReference type="InterPro" id="IPR041715">
    <property type="entry name" value="HisRS-like_core"/>
</dbReference>
<dbReference type="InterPro" id="IPR004516">
    <property type="entry name" value="HisRS/HisZ"/>
</dbReference>
<dbReference type="InterPro" id="IPR033656">
    <property type="entry name" value="HisRS_anticodon"/>
</dbReference>
<dbReference type="NCBIfam" id="TIGR00442">
    <property type="entry name" value="hisS"/>
    <property type="match status" value="1"/>
</dbReference>
<dbReference type="PANTHER" id="PTHR43707:SF1">
    <property type="entry name" value="HISTIDINE--TRNA LIGASE, MITOCHONDRIAL-RELATED"/>
    <property type="match status" value="1"/>
</dbReference>
<dbReference type="PANTHER" id="PTHR43707">
    <property type="entry name" value="HISTIDYL-TRNA SYNTHETASE"/>
    <property type="match status" value="1"/>
</dbReference>
<dbReference type="Pfam" id="PF03129">
    <property type="entry name" value="HGTP_anticodon"/>
    <property type="match status" value="1"/>
</dbReference>
<dbReference type="Pfam" id="PF13393">
    <property type="entry name" value="tRNA-synt_His"/>
    <property type="match status" value="1"/>
</dbReference>
<dbReference type="PIRSF" id="PIRSF001549">
    <property type="entry name" value="His-tRNA_synth"/>
    <property type="match status" value="1"/>
</dbReference>
<dbReference type="SUPFAM" id="SSF52954">
    <property type="entry name" value="Class II aaRS ABD-related"/>
    <property type="match status" value="1"/>
</dbReference>
<dbReference type="SUPFAM" id="SSF55681">
    <property type="entry name" value="Class II aaRS and biotin synthetases"/>
    <property type="match status" value="1"/>
</dbReference>
<dbReference type="PROSITE" id="PS50862">
    <property type="entry name" value="AA_TRNA_LIGASE_II"/>
    <property type="match status" value="1"/>
</dbReference>
<proteinExistence type="inferred from homology"/>
<sequence>MSLQAPKGTKDLLPTESYKWQYLENKFRNIAADFGCREIRTPVFEYTELFQRGVGETTDVVQKEMYTFEDKAGRSITLKPEGTSPAVRAFVEGRLFNETQPTKMYYFTPVMRYENVQKGRLRQHHQFGIEIFGAKDASVDAEVISIPVGIYKELGVEGVELNINSIGCPKCRKTYNEALKKYLSKNYDKLCSTCKTRFDKNPLRILDCKVDTCKEIVKDAPIILDYICDECKDHFEALKSYLDVLDIKYKVDPFIVRGLDYYSKTVFEFIIDDITICAGGRYDYLIEEIGGPSMPAVGFGMGIERLLLTLQEKAIEIPEEAYVDLYLGNMGDKAKLEVLKLAKELRDRHIKCEIDHMGKSVKAQMKYANRIGAKYSMVLGEEELNTGKVSLKRMEDGQQIEVDIKEIDTLIKVFK</sequence>
<gene>
    <name evidence="1" type="primary">hisS</name>
    <name type="ordered locus">CBO3055</name>
    <name type="ordered locus">CLC_2957</name>
</gene>
<feature type="chain" id="PRO_1000016343" description="Histidine--tRNA ligase">
    <location>
        <begin position="1"/>
        <end position="415"/>
    </location>
</feature>
<comment type="catalytic activity">
    <reaction evidence="1">
        <text>tRNA(His) + L-histidine + ATP = L-histidyl-tRNA(His) + AMP + diphosphate + H(+)</text>
        <dbReference type="Rhea" id="RHEA:17313"/>
        <dbReference type="Rhea" id="RHEA-COMP:9665"/>
        <dbReference type="Rhea" id="RHEA-COMP:9689"/>
        <dbReference type="ChEBI" id="CHEBI:15378"/>
        <dbReference type="ChEBI" id="CHEBI:30616"/>
        <dbReference type="ChEBI" id="CHEBI:33019"/>
        <dbReference type="ChEBI" id="CHEBI:57595"/>
        <dbReference type="ChEBI" id="CHEBI:78442"/>
        <dbReference type="ChEBI" id="CHEBI:78527"/>
        <dbReference type="ChEBI" id="CHEBI:456215"/>
        <dbReference type="EC" id="6.1.1.21"/>
    </reaction>
</comment>
<comment type="subunit">
    <text evidence="1">Homodimer.</text>
</comment>
<comment type="subcellular location">
    <subcellularLocation>
        <location evidence="1">Cytoplasm</location>
    </subcellularLocation>
</comment>
<comment type="similarity">
    <text evidence="1">Belongs to the class-II aminoacyl-tRNA synthetase family.</text>
</comment>
<keyword id="KW-0030">Aminoacyl-tRNA synthetase</keyword>
<keyword id="KW-0067">ATP-binding</keyword>
<keyword id="KW-0963">Cytoplasm</keyword>
<keyword id="KW-0436">Ligase</keyword>
<keyword id="KW-0547">Nucleotide-binding</keyword>
<keyword id="KW-0648">Protein biosynthesis</keyword>
<keyword id="KW-1185">Reference proteome</keyword>